<comment type="subcellular location">
    <subcellularLocation>
        <location evidence="3">Nucleus</location>
    </subcellularLocation>
</comment>
<keyword id="KW-0238">DNA-binding</keyword>
<keyword id="KW-0539">Nucleus</keyword>
<keyword id="KW-1185">Reference proteome</keyword>
<keyword id="KW-0804">Transcription</keyword>
<keyword id="KW-0805">Transcription regulation</keyword>
<gene>
    <name type="primary">TCP22</name>
    <name type="ordered locus">At1g72010</name>
    <name type="ORF">F28P5.10</name>
</gene>
<evidence type="ECO:0000255" key="1">
    <source>
        <dbReference type="PROSITE-ProRule" id="PRU00701"/>
    </source>
</evidence>
<evidence type="ECO:0000256" key="2">
    <source>
        <dbReference type="SAM" id="MobiDB-lite"/>
    </source>
</evidence>
<evidence type="ECO:0000305" key="3"/>
<name>TCP22_ARATH</name>
<proteinExistence type="evidence at transcript level"/>
<feature type="chain" id="PRO_0000330796" description="Transcription factor TCP22">
    <location>
        <begin position="1"/>
        <end position="375"/>
    </location>
</feature>
<feature type="domain" description="TCP" evidence="1">
    <location>
        <begin position="63"/>
        <end position="117"/>
    </location>
</feature>
<feature type="region of interest" description="Disordered" evidence="2">
    <location>
        <begin position="1"/>
        <end position="76"/>
    </location>
</feature>
<feature type="region of interest" description="Disordered" evidence="2">
    <location>
        <begin position="220"/>
        <end position="248"/>
    </location>
</feature>
<feature type="region of interest" description="Disordered" evidence="2">
    <location>
        <begin position="349"/>
        <end position="375"/>
    </location>
</feature>
<feature type="compositionally biased region" description="Polar residues" evidence="2">
    <location>
        <begin position="1"/>
        <end position="18"/>
    </location>
</feature>
<feature type="compositionally biased region" description="Low complexity" evidence="2">
    <location>
        <begin position="20"/>
        <end position="51"/>
    </location>
</feature>
<feature type="compositionally biased region" description="Basic residues" evidence="2">
    <location>
        <begin position="58"/>
        <end position="67"/>
    </location>
</feature>
<feature type="compositionally biased region" description="Low complexity" evidence="2">
    <location>
        <begin position="222"/>
        <end position="238"/>
    </location>
</feature>
<feature type="compositionally biased region" description="Low complexity" evidence="2">
    <location>
        <begin position="354"/>
        <end position="365"/>
    </location>
</feature>
<protein>
    <recommendedName>
        <fullName>Transcription factor TCP22</fullName>
    </recommendedName>
</protein>
<organism>
    <name type="scientific">Arabidopsis thaliana</name>
    <name type="common">Mouse-ear cress</name>
    <dbReference type="NCBI Taxonomy" id="3702"/>
    <lineage>
        <taxon>Eukaryota</taxon>
        <taxon>Viridiplantae</taxon>
        <taxon>Streptophyta</taxon>
        <taxon>Embryophyta</taxon>
        <taxon>Tracheophyta</taxon>
        <taxon>Spermatophyta</taxon>
        <taxon>Magnoliopsida</taxon>
        <taxon>eudicotyledons</taxon>
        <taxon>Gunneridae</taxon>
        <taxon>Pentapetalae</taxon>
        <taxon>rosids</taxon>
        <taxon>malvids</taxon>
        <taxon>Brassicales</taxon>
        <taxon>Brassicaceae</taxon>
        <taxon>Camelineae</taxon>
        <taxon>Arabidopsis</taxon>
    </lineage>
</organism>
<reference key="1">
    <citation type="journal article" date="2000" name="Nature">
        <title>Sequence and analysis of chromosome 1 of the plant Arabidopsis thaliana.</title>
        <authorList>
            <person name="Theologis A."/>
            <person name="Ecker J.R."/>
            <person name="Palm C.J."/>
            <person name="Federspiel N.A."/>
            <person name="Kaul S."/>
            <person name="White O."/>
            <person name="Alonso J."/>
            <person name="Altafi H."/>
            <person name="Araujo R."/>
            <person name="Bowman C.L."/>
            <person name="Brooks S.Y."/>
            <person name="Buehler E."/>
            <person name="Chan A."/>
            <person name="Chao Q."/>
            <person name="Chen H."/>
            <person name="Cheuk R.F."/>
            <person name="Chin C.W."/>
            <person name="Chung M.K."/>
            <person name="Conn L."/>
            <person name="Conway A.B."/>
            <person name="Conway A.R."/>
            <person name="Creasy T.H."/>
            <person name="Dewar K."/>
            <person name="Dunn P."/>
            <person name="Etgu P."/>
            <person name="Feldblyum T.V."/>
            <person name="Feng J.-D."/>
            <person name="Fong B."/>
            <person name="Fujii C.Y."/>
            <person name="Gill J.E."/>
            <person name="Goldsmith A.D."/>
            <person name="Haas B."/>
            <person name="Hansen N.F."/>
            <person name="Hughes B."/>
            <person name="Huizar L."/>
            <person name="Hunter J.L."/>
            <person name="Jenkins J."/>
            <person name="Johnson-Hopson C."/>
            <person name="Khan S."/>
            <person name="Khaykin E."/>
            <person name="Kim C.J."/>
            <person name="Koo H.L."/>
            <person name="Kremenetskaia I."/>
            <person name="Kurtz D.B."/>
            <person name="Kwan A."/>
            <person name="Lam B."/>
            <person name="Langin-Hooper S."/>
            <person name="Lee A."/>
            <person name="Lee J.M."/>
            <person name="Lenz C.A."/>
            <person name="Li J.H."/>
            <person name="Li Y.-P."/>
            <person name="Lin X."/>
            <person name="Liu S.X."/>
            <person name="Liu Z.A."/>
            <person name="Luros J.S."/>
            <person name="Maiti R."/>
            <person name="Marziali A."/>
            <person name="Militscher J."/>
            <person name="Miranda M."/>
            <person name="Nguyen M."/>
            <person name="Nierman W.C."/>
            <person name="Osborne B.I."/>
            <person name="Pai G."/>
            <person name="Peterson J."/>
            <person name="Pham P.K."/>
            <person name="Rizzo M."/>
            <person name="Rooney T."/>
            <person name="Rowley D."/>
            <person name="Sakano H."/>
            <person name="Salzberg S.L."/>
            <person name="Schwartz J.R."/>
            <person name="Shinn P."/>
            <person name="Southwick A.M."/>
            <person name="Sun H."/>
            <person name="Tallon L.J."/>
            <person name="Tambunga G."/>
            <person name="Toriumi M.J."/>
            <person name="Town C.D."/>
            <person name="Utterback T."/>
            <person name="Van Aken S."/>
            <person name="Vaysberg M."/>
            <person name="Vysotskaia V.S."/>
            <person name="Walker M."/>
            <person name="Wu D."/>
            <person name="Yu G."/>
            <person name="Fraser C.M."/>
            <person name="Venter J.C."/>
            <person name="Davis R.W."/>
        </authorList>
    </citation>
    <scope>NUCLEOTIDE SEQUENCE [LARGE SCALE GENOMIC DNA]</scope>
    <source>
        <strain>cv. Columbia</strain>
    </source>
</reference>
<reference key="2">
    <citation type="journal article" date="2017" name="Plant J.">
        <title>Araport11: a complete reannotation of the Arabidopsis thaliana reference genome.</title>
        <authorList>
            <person name="Cheng C.Y."/>
            <person name="Krishnakumar V."/>
            <person name="Chan A.P."/>
            <person name="Thibaud-Nissen F."/>
            <person name="Schobel S."/>
            <person name="Town C.D."/>
        </authorList>
    </citation>
    <scope>GENOME REANNOTATION</scope>
    <source>
        <strain>cv. Columbia</strain>
    </source>
</reference>
<reference key="3">
    <citation type="journal article" date="2003" name="Science">
        <title>Empirical analysis of transcriptional activity in the Arabidopsis genome.</title>
        <authorList>
            <person name="Yamada K."/>
            <person name="Lim J."/>
            <person name="Dale J.M."/>
            <person name="Chen H."/>
            <person name="Shinn P."/>
            <person name="Palm C.J."/>
            <person name="Southwick A.M."/>
            <person name="Wu H.C."/>
            <person name="Kim C.J."/>
            <person name="Nguyen M."/>
            <person name="Pham P.K."/>
            <person name="Cheuk R.F."/>
            <person name="Karlin-Newmann G."/>
            <person name="Liu S.X."/>
            <person name="Lam B."/>
            <person name="Sakano H."/>
            <person name="Wu T."/>
            <person name="Yu G."/>
            <person name="Miranda M."/>
            <person name="Quach H.L."/>
            <person name="Tripp M."/>
            <person name="Chang C.H."/>
            <person name="Lee J.M."/>
            <person name="Toriumi M.J."/>
            <person name="Chan M.M."/>
            <person name="Tang C.C."/>
            <person name="Onodera C.S."/>
            <person name="Deng J.M."/>
            <person name="Akiyama K."/>
            <person name="Ansari Y."/>
            <person name="Arakawa T."/>
            <person name="Banh J."/>
            <person name="Banno F."/>
            <person name="Bowser L."/>
            <person name="Brooks S.Y."/>
            <person name="Carninci P."/>
            <person name="Chao Q."/>
            <person name="Choy N."/>
            <person name="Enju A."/>
            <person name="Goldsmith A.D."/>
            <person name="Gurjal M."/>
            <person name="Hansen N.F."/>
            <person name="Hayashizaki Y."/>
            <person name="Johnson-Hopson C."/>
            <person name="Hsuan V.W."/>
            <person name="Iida K."/>
            <person name="Karnes M."/>
            <person name="Khan S."/>
            <person name="Koesema E."/>
            <person name="Ishida J."/>
            <person name="Jiang P.X."/>
            <person name="Jones T."/>
            <person name="Kawai J."/>
            <person name="Kamiya A."/>
            <person name="Meyers C."/>
            <person name="Nakajima M."/>
            <person name="Narusaka M."/>
            <person name="Seki M."/>
            <person name="Sakurai T."/>
            <person name="Satou M."/>
            <person name="Tamse R."/>
            <person name="Vaysberg M."/>
            <person name="Wallender E.K."/>
            <person name="Wong C."/>
            <person name="Yamamura Y."/>
            <person name="Yuan S."/>
            <person name="Shinozaki K."/>
            <person name="Davis R.W."/>
            <person name="Theologis A."/>
            <person name="Ecker J.R."/>
        </authorList>
    </citation>
    <scope>NUCLEOTIDE SEQUENCE [LARGE SCALE MRNA]</scope>
    <source>
        <strain>cv. Columbia</strain>
    </source>
</reference>
<reference key="4">
    <citation type="journal article" date="2007" name="Plant Cell">
        <title>Arabidopsis BRANCHED1 acts as an integrator of branching signals within axillary buds.</title>
        <authorList>
            <person name="Aguilar-Martinez J.A."/>
            <person name="Poza-Carrion C."/>
            <person name="Cubas P."/>
        </authorList>
    </citation>
    <scope>GENE FAMILY</scope>
    <scope>NOMENCLATURE</scope>
</reference>
<sequence length="375" mass="39599">MNQNSSVAEATLQLNSGEKPSPGSIPFISSGQHGNISTSATSSTSTSSGSALAVVKSAVKKPTKDRHTKVDGRGRRIRMPAMCAARVFQLTRELGHKSDGETIEWLLQQAEPAIIASTGTGTIPANFSTLNASLRSGGGSTLFSQASKSSSSPLSFHSTGMSLYEDNNGTNGSSVDPSRKLLNSAANAAVFGFHHQMYPPIMSTERNPNTLVKPYREDYFKEPSSAAEPSESSQKASQFQEQELAQGRGTANVVPQPMWAVAPGTTNGGSAFWMLPMSGSGGREQMQQQPGHQMWAFNPGNYPVGTGRVVTAPMGSMMLGGQQLGLGVAEGNMAAAMRGSRGDGLAMTLDQHQHQLQHQEPNQSQASENGGDDKK</sequence>
<dbReference type="EMBL" id="AC069273">
    <property type="protein sequence ID" value="AAG51130.1"/>
    <property type="molecule type" value="Genomic_DNA"/>
</dbReference>
<dbReference type="EMBL" id="CP002684">
    <property type="protein sequence ID" value="AEE35263.1"/>
    <property type="molecule type" value="Genomic_DNA"/>
</dbReference>
<dbReference type="EMBL" id="AY080776">
    <property type="protein sequence ID" value="AAL87260.1"/>
    <property type="molecule type" value="mRNA"/>
</dbReference>
<dbReference type="EMBL" id="AY150488">
    <property type="protein sequence ID" value="AAN12905.1"/>
    <property type="molecule type" value="mRNA"/>
</dbReference>
<dbReference type="PIR" id="B96743">
    <property type="entry name" value="B96743"/>
</dbReference>
<dbReference type="RefSeq" id="NP_177346.1">
    <property type="nucleotide sequence ID" value="NM_105859.5"/>
</dbReference>
<dbReference type="SMR" id="Q9C7G4"/>
<dbReference type="BioGRID" id="28752">
    <property type="interactions" value="10"/>
</dbReference>
<dbReference type="FunCoup" id="Q9C7G4">
    <property type="interactions" value="85"/>
</dbReference>
<dbReference type="IntAct" id="Q9C7G4">
    <property type="interactions" value="14"/>
</dbReference>
<dbReference type="STRING" id="3702.Q9C7G4"/>
<dbReference type="iPTMnet" id="Q9C7G4"/>
<dbReference type="PaxDb" id="3702-AT1G72010.1"/>
<dbReference type="ProteomicsDB" id="246430"/>
<dbReference type="EnsemblPlants" id="AT1G72010.1">
    <property type="protein sequence ID" value="AT1G72010.1"/>
    <property type="gene ID" value="AT1G72010"/>
</dbReference>
<dbReference type="GeneID" id="843532"/>
<dbReference type="Gramene" id="AT1G72010.1">
    <property type="protein sequence ID" value="AT1G72010.1"/>
    <property type="gene ID" value="AT1G72010"/>
</dbReference>
<dbReference type="KEGG" id="ath:AT1G72010"/>
<dbReference type="Araport" id="AT1G72010"/>
<dbReference type="TAIR" id="AT1G72010">
    <property type="gene designation" value="TCP22"/>
</dbReference>
<dbReference type="eggNOG" id="ENOG502QUI5">
    <property type="taxonomic scope" value="Eukaryota"/>
</dbReference>
<dbReference type="HOGENOM" id="CLU_025170_2_1_1"/>
<dbReference type="InParanoid" id="Q9C7G4"/>
<dbReference type="OMA" id="QMYPPIM"/>
<dbReference type="PhylomeDB" id="Q9C7G4"/>
<dbReference type="PRO" id="PR:Q9C7G4"/>
<dbReference type="Proteomes" id="UP000006548">
    <property type="component" value="Chromosome 1"/>
</dbReference>
<dbReference type="ExpressionAtlas" id="Q9C7G4">
    <property type="expression patterns" value="baseline and differential"/>
</dbReference>
<dbReference type="GO" id="GO:0005634">
    <property type="term" value="C:nucleus"/>
    <property type="evidence" value="ECO:0007669"/>
    <property type="project" value="UniProtKB-SubCell"/>
</dbReference>
<dbReference type="GO" id="GO:0003677">
    <property type="term" value="F:DNA binding"/>
    <property type="evidence" value="ECO:0007669"/>
    <property type="project" value="UniProtKB-KW"/>
</dbReference>
<dbReference type="GO" id="GO:0003700">
    <property type="term" value="F:DNA-binding transcription factor activity"/>
    <property type="evidence" value="ECO:0000250"/>
    <property type="project" value="TAIR"/>
</dbReference>
<dbReference type="GO" id="GO:0006355">
    <property type="term" value="P:regulation of DNA-templated transcription"/>
    <property type="evidence" value="ECO:0000304"/>
    <property type="project" value="TAIR"/>
</dbReference>
<dbReference type="InterPro" id="IPR017887">
    <property type="entry name" value="TF_TCP_subgr"/>
</dbReference>
<dbReference type="InterPro" id="IPR005333">
    <property type="entry name" value="Transcription_factor_TCP"/>
</dbReference>
<dbReference type="PANTHER" id="PTHR31072:SF108">
    <property type="entry name" value="TRANSCRIPTION FACTOR TCP22-RELATED"/>
    <property type="match status" value="1"/>
</dbReference>
<dbReference type="PANTHER" id="PTHR31072">
    <property type="entry name" value="TRANSCRIPTION FACTOR TCP4-RELATED"/>
    <property type="match status" value="1"/>
</dbReference>
<dbReference type="Pfam" id="PF03634">
    <property type="entry name" value="TCP"/>
    <property type="match status" value="1"/>
</dbReference>
<dbReference type="PROSITE" id="PS51369">
    <property type="entry name" value="TCP"/>
    <property type="match status" value="1"/>
</dbReference>
<accession>Q9C7G4</accession>